<organism>
    <name type="scientific">Variovorax paradoxus (strain S110)</name>
    <dbReference type="NCBI Taxonomy" id="543728"/>
    <lineage>
        <taxon>Bacteria</taxon>
        <taxon>Pseudomonadati</taxon>
        <taxon>Pseudomonadota</taxon>
        <taxon>Betaproteobacteria</taxon>
        <taxon>Burkholderiales</taxon>
        <taxon>Comamonadaceae</taxon>
        <taxon>Variovorax</taxon>
    </lineage>
</organism>
<protein>
    <recommendedName>
        <fullName evidence="1">RNA-binding protein Hfq</fullName>
    </recommendedName>
</protein>
<comment type="function">
    <text evidence="1">RNA chaperone that binds small regulatory RNA (sRNAs) and mRNAs to facilitate mRNA translational regulation in response to envelope stress, environmental stress and changes in metabolite concentrations. Also binds with high specificity to tRNAs.</text>
</comment>
<comment type="subunit">
    <text evidence="1">Homohexamer.</text>
</comment>
<comment type="similarity">
    <text evidence="1">Belongs to the Hfq family.</text>
</comment>
<name>HFQ_VARPS</name>
<sequence length="81" mass="9016">MSNKGQLLQDPFLNTLRREHVPVSIYLVNGIKLQGQIESFDQYVVLLRNTVTQMVYKHAISTIVPGRAVNFSAAENDDAAA</sequence>
<accession>C5CXH1</accession>
<dbReference type="EMBL" id="CP001635">
    <property type="protein sequence ID" value="ACS18827.1"/>
    <property type="molecule type" value="Genomic_DNA"/>
</dbReference>
<dbReference type="SMR" id="C5CXH1"/>
<dbReference type="STRING" id="543728.Vapar_2192"/>
<dbReference type="KEGG" id="vap:Vapar_2192"/>
<dbReference type="eggNOG" id="COG1923">
    <property type="taxonomic scope" value="Bacteria"/>
</dbReference>
<dbReference type="HOGENOM" id="CLU_113688_2_2_4"/>
<dbReference type="OrthoDB" id="9799751at2"/>
<dbReference type="GO" id="GO:0005829">
    <property type="term" value="C:cytosol"/>
    <property type="evidence" value="ECO:0007669"/>
    <property type="project" value="TreeGrafter"/>
</dbReference>
<dbReference type="GO" id="GO:0003723">
    <property type="term" value="F:RNA binding"/>
    <property type="evidence" value="ECO:0007669"/>
    <property type="project" value="UniProtKB-UniRule"/>
</dbReference>
<dbReference type="GO" id="GO:0006355">
    <property type="term" value="P:regulation of DNA-templated transcription"/>
    <property type="evidence" value="ECO:0007669"/>
    <property type="project" value="InterPro"/>
</dbReference>
<dbReference type="GO" id="GO:0043487">
    <property type="term" value="P:regulation of RNA stability"/>
    <property type="evidence" value="ECO:0007669"/>
    <property type="project" value="TreeGrafter"/>
</dbReference>
<dbReference type="GO" id="GO:0045974">
    <property type="term" value="P:regulation of translation, ncRNA-mediated"/>
    <property type="evidence" value="ECO:0007669"/>
    <property type="project" value="TreeGrafter"/>
</dbReference>
<dbReference type="CDD" id="cd01716">
    <property type="entry name" value="Hfq"/>
    <property type="match status" value="1"/>
</dbReference>
<dbReference type="FunFam" id="2.30.30.100:FF:000001">
    <property type="entry name" value="RNA-binding protein Hfq"/>
    <property type="match status" value="1"/>
</dbReference>
<dbReference type="Gene3D" id="2.30.30.100">
    <property type="match status" value="1"/>
</dbReference>
<dbReference type="HAMAP" id="MF_00436">
    <property type="entry name" value="Hfq"/>
    <property type="match status" value="1"/>
</dbReference>
<dbReference type="InterPro" id="IPR005001">
    <property type="entry name" value="Hfq"/>
</dbReference>
<dbReference type="InterPro" id="IPR010920">
    <property type="entry name" value="LSM_dom_sf"/>
</dbReference>
<dbReference type="InterPro" id="IPR047575">
    <property type="entry name" value="Sm"/>
</dbReference>
<dbReference type="NCBIfam" id="TIGR02383">
    <property type="entry name" value="Hfq"/>
    <property type="match status" value="1"/>
</dbReference>
<dbReference type="NCBIfam" id="NF001602">
    <property type="entry name" value="PRK00395.1"/>
    <property type="match status" value="1"/>
</dbReference>
<dbReference type="PANTHER" id="PTHR34772">
    <property type="entry name" value="RNA-BINDING PROTEIN HFQ"/>
    <property type="match status" value="1"/>
</dbReference>
<dbReference type="PANTHER" id="PTHR34772:SF1">
    <property type="entry name" value="RNA-BINDING PROTEIN HFQ"/>
    <property type="match status" value="1"/>
</dbReference>
<dbReference type="Pfam" id="PF17209">
    <property type="entry name" value="Hfq"/>
    <property type="match status" value="1"/>
</dbReference>
<dbReference type="SUPFAM" id="SSF50182">
    <property type="entry name" value="Sm-like ribonucleoproteins"/>
    <property type="match status" value="1"/>
</dbReference>
<dbReference type="PROSITE" id="PS52002">
    <property type="entry name" value="SM"/>
    <property type="match status" value="1"/>
</dbReference>
<feature type="chain" id="PRO_1000206107" description="RNA-binding protein Hfq">
    <location>
        <begin position="1"/>
        <end position="81"/>
    </location>
</feature>
<feature type="domain" description="Sm" evidence="2">
    <location>
        <begin position="10"/>
        <end position="69"/>
    </location>
</feature>
<reference key="1">
    <citation type="journal article" date="2011" name="J. Bacteriol.">
        <title>Complete genome sequence of the metabolically versatile plant growth-promoting endophyte, Variovorax paradoxus S110.</title>
        <authorList>
            <person name="Han J.I."/>
            <person name="Choi H.K."/>
            <person name="Lee S.W."/>
            <person name="Orwin P.M."/>
            <person name="Kim J."/>
            <person name="Laroe S.L."/>
            <person name="Kim T.G."/>
            <person name="O'Neil J."/>
            <person name="Leadbetter J.R."/>
            <person name="Lee S.Y."/>
            <person name="Hur C.G."/>
            <person name="Spain J.C."/>
            <person name="Ovchinnikova G."/>
            <person name="Goodwin L."/>
            <person name="Han C."/>
        </authorList>
    </citation>
    <scope>NUCLEOTIDE SEQUENCE [LARGE SCALE GENOMIC DNA]</scope>
    <source>
        <strain>S110</strain>
    </source>
</reference>
<gene>
    <name evidence="1" type="primary">hfq</name>
    <name type="ordered locus">Vapar_2192</name>
</gene>
<evidence type="ECO:0000255" key="1">
    <source>
        <dbReference type="HAMAP-Rule" id="MF_00436"/>
    </source>
</evidence>
<evidence type="ECO:0000255" key="2">
    <source>
        <dbReference type="PROSITE-ProRule" id="PRU01346"/>
    </source>
</evidence>
<keyword id="KW-0694">RNA-binding</keyword>
<keyword id="KW-0346">Stress response</keyword>
<proteinExistence type="inferred from homology"/>